<accession>Q4UZF6</accession>
<gene>
    <name type="primary">clp</name>
    <name type="ordered locus">XC_0486</name>
</gene>
<name>CLP_XANC8</name>
<dbReference type="EMBL" id="CP000050">
    <property type="protein sequence ID" value="AAY47567.1"/>
    <property type="molecule type" value="Genomic_DNA"/>
</dbReference>
<dbReference type="SMR" id="Q4UZF6"/>
<dbReference type="KEGG" id="xcb:XC_0486"/>
<dbReference type="HOGENOM" id="CLU_075053_3_5_6"/>
<dbReference type="Proteomes" id="UP000000420">
    <property type="component" value="Chromosome"/>
</dbReference>
<dbReference type="CollecTF" id="EXPREG_00000e30"/>
<dbReference type="GO" id="GO:0005829">
    <property type="term" value="C:cytosol"/>
    <property type="evidence" value="ECO:0007669"/>
    <property type="project" value="TreeGrafter"/>
</dbReference>
<dbReference type="GO" id="GO:0032993">
    <property type="term" value="C:protein-DNA complex"/>
    <property type="evidence" value="ECO:0000315"/>
    <property type="project" value="CollecTF"/>
</dbReference>
<dbReference type="GO" id="GO:0003824">
    <property type="term" value="F:catalytic activity"/>
    <property type="evidence" value="ECO:0007669"/>
    <property type="project" value="UniProtKB-KW"/>
</dbReference>
<dbReference type="GO" id="GO:0035438">
    <property type="term" value="F:cyclic-di-GMP binding"/>
    <property type="evidence" value="ECO:0000314"/>
    <property type="project" value="UniProtKB"/>
</dbReference>
<dbReference type="GO" id="GO:0003677">
    <property type="term" value="F:DNA binding"/>
    <property type="evidence" value="ECO:0000314"/>
    <property type="project" value="UniProtKB"/>
</dbReference>
<dbReference type="GO" id="GO:0001216">
    <property type="term" value="F:DNA-binding transcription activator activity"/>
    <property type="evidence" value="ECO:0000315"/>
    <property type="project" value="CollecTF"/>
</dbReference>
<dbReference type="GO" id="GO:0003700">
    <property type="term" value="F:DNA-binding transcription factor activity"/>
    <property type="evidence" value="ECO:0000315"/>
    <property type="project" value="UniProtKB"/>
</dbReference>
<dbReference type="GO" id="GO:0046983">
    <property type="term" value="F:protein dimerization activity"/>
    <property type="evidence" value="ECO:0000250"/>
    <property type="project" value="UniProtKB"/>
</dbReference>
<dbReference type="GO" id="GO:0000976">
    <property type="term" value="F:transcription cis-regulatory region binding"/>
    <property type="evidence" value="ECO:0000315"/>
    <property type="project" value="CollecTF"/>
</dbReference>
<dbReference type="GO" id="GO:0045893">
    <property type="term" value="P:positive regulation of DNA-templated transcription"/>
    <property type="evidence" value="ECO:0000270"/>
    <property type="project" value="CollecTF"/>
</dbReference>
<dbReference type="GO" id="GO:0006355">
    <property type="term" value="P:regulation of DNA-templated transcription"/>
    <property type="evidence" value="ECO:0000315"/>
    <property type="project" value="UniProtKB"/>
</dbReference>
<dbReference type="CDD" id="cd00038">
    <property type="entry name" value="CAP_ED"/>
    <property type="match status" value="1"/>
</dbReference>
<dbReference type="FunFam" id="1.10.10.10:FF:000006">
    <property type="entry name" value="cAMP-activated global transcriptional regulator CRP"/>
    <property type="match status" value="1"/>
</dbReference>
<dbReference type="FunFam" id="2.60.120.10:FF:000100">
    <property type="entry name" value="CRP-like protein Clp"/>
    <property type="match status" value="1"/>
</dbReference>
<dbReference type="Gene3D" id="2.60.120.10">
    <property type="entry name" value="Jelly Rolls"/>
    <property type="match status" value="1"/>
</dbReference>
<dbReference type="Gene3D" id="1.10.10.10">
    <property type="entry name" value="Winged helix-like DNA-binding domain superfamily/Winged helix DNA-binding domain"/>
    <property type="match status" value="1"/>
</dbReference>
<dbReference type="InterPro" id="IPR000595">
    <property type="entry name" value="cNMP-bd_dom"/>
</dbReference>
<dbReference type="InterPro" id="IPR018490">
    <property type="entry name" value="cNMP-bd_dom_sf"/>
</dbReference>
<dbReference type="InterPro" id="IPR050397">
    <property type="entry name" value="Env_Response_Regulators"/>
</dbReference>
<dbReference type="InterPro" id="IPR012318">
    <property type="entry name" value="HTH_CRP"/>
</dbReference>
<dbReference type="InterPro" id="IPR014710">
    <property type="entry name" value="RmlC-like_jellyroll"/>
</dbReference>
<dbReference type="InterPro" id="IPR018335">
    <property type="entry name" value="Tscrpt_reg_HTH_Crp-type_CS"/>
</dbReference>
<dbReference type="InterPro" id="IPR036388">
    <property type="entry name" value="WH-like_DNA-bd_sf"/>
</dbReference>
<dbReference type="InterPro" id="IPR036390">
    <property type="entry name" value="WH_DNA-bd_sf"/>
</dbReference>
<dbReference type="NCBIfam" id="NF008732">
    <property type="entry name" value="PRK11753.1"/>
    <property type="match status" value="1"/>
</dbReference>
<dbReference type="PANTHER" id="PTHR24567">
    <property type="entry name" value="CRP FAMILY TRANSCRIPTIONAL REGULATORY PROTEIN"/>
    <property type="match status" value="1"/>
</dbReference>
<dbReference type="PANTHER" id="PTHR24567:SF68">
    <property type="entry name" value="DNA-BINDING TRANSCRIPTIONAL DUAL REGULATOR CRP"/>
    <property type="match status" value="1"/>
</dbReference>
<dbReference type="Pfam" id="PF00027">
    <property type="entry name" value="cNMP_binding"/>
    <property type="match status" value="1"/>
</dbReference>
<dbReference type="Pfam" id="PF00325">
    <property type="entry name" value="Crp"/>
    <property type="match status" value="1"/>
</dbReference>
<dbReference type="PRINTS" id="PR00034">
    <property type="entry name" value="HTHCRP"/>
</dbReference>
<dbReference type="SMART" id="SM00100">
    <property type="entry name" value="cNMP"/>
    <property type="match status" value="1"/>
</dbReference>
<dbReference type="SMART" id="SM00419">
    <property type="entry name" value="HTH_CRP"/>
    <property type="match status" value="1"/>
</dbReference>
<dbReference type="SUPFAM" id="SSF51206">
    <property type="entry name" value="cAMP-binding domain-like"/>
    <property type="match status" value="1"/>
</dbReference>
<dbReference type="SUPFAM" id="SSF46785">
    <property type="entry name" value="Winged helix' DNA-binding domain"/>
    <property type="match status" value="1"/>
</dbReference>
<dbReference type="PROSITE" id="PS50042">
    <property type="entry name" value="CNMP_BINDING_3"/>
    <property type="match status" value="1"/>
</dbReference>
<dbReference type="PROSITE" id="PS00042">
    <property type="entry name" value="HTH_CRP_1"/>
    <property type="match status" value="1"/>
</dbReference>
<dbReference type="PROSITE" id="PS51063">
    <property type="entry name" value="HTH_CRP_2"/>
    <property type="match status" value="1"/>
</dbReference>
<protein>
    <recommendedName>
        <fullName>CRP-like protein Clp</fullName>
    </recommendedName>
    <alternativeName>
        <fullName>Catabolite activation-like protein</fullName>
        <shortName>CAP-like</shortName>
    </alternativeName>
</protein>
<proteinExistence type="evidence at protein level"/>
<evidence type="ECO:0000250" key="1"/>
<evidence type="ECO:0000255" key="2">
    <source>
        <dbReference type="PROSITE-ProRule" id="PRU00387"/>
    </source>
</evidence>
<evidence type="ECO:0000269" key="3">
    <source>
    </source>
</evidence>
<evidence type="ECO:0000305" key="4"/>
<feature type="chain" id="PRO_0000405702" description="CRP-like protein Clp">
    <location>
        <begin position="1"/>
        <end position="230"/>
    </location>
</feature>
<feature type="domain" description="HTH crp-type" evidence="2">
    <location>
        <begin position="158"/>
        <end position="230"/>
    </location>
</feature>
<feature type="DNA-binding region" description="H-T-H motif" evidence="2">
    <location>
        <begin position="190"/>
        <end position="209"/>
    </location>
</feature>
<feature type="binding site">
    <location>
        <begin position="18"/>
        <end position="139"/>
    </location>
    <ligand>
        <name>a nucleoside 3',5'-cyclic phosphate</name>
        <dbReference type="ChEBI" id="CHEBI:58464"/>
    </ligand>
</feature>
<feature type="mutagenesis site" description="No change in DNA-binding, but decrease in response to c-di-GMP." evidence="3">
    <original>E</original>
    <variation>S</variation>
    <location>
        <position position="99"/>
    </location>
</feature>
<feature type="mutagenesis site" description="No change in DNA-binding and in response to c-di-GMP." evidence="3">
    <original>T</original>
    <variation>S</variation>
    <location>
        <position position="149"/>
    </location>
</feature>
<keyword id="KW-0010">Activator</keyword>
<keyword id="KW-0021">Allosteric enzyme</keyword>
<keyword id="KW-0973">c-di-GMP</keyword>
<keyword id="KW-0963">Cytoplasm</keyword>
<keyword id="KW-0238">DNA-binding</keyword>
<keyword id="KW-0678">Repressor</keyword>
<keyword id="KW-0804">Transcription</keyword>
<keyword id="KW-0805">Transcription regulation</keyword>
<keyword id="KW-0843">Virulence</keyword>
<organism>
    <name type="scientific">Xanthomonas campestris pv. campestris (strain 8004)</name>
    <dbReference type="NCBI Taxonomy" id="314565"/>
    <lineage>
        <taxon>Bacteria</taxon>
        <taxon>Pseudomonadati</taxon>
        <taxon>Pseudomonadota</taxon>
        <taxon>Gammaproteobacteria</taxon>
        <taxon>Lysobacterales</taxon>
        <taxon>Lysobacteraceae</taxon>
        <taxon>Xanthomonas</taxon>
    </lineage>
</organism>
<comment type="function">
    <text evidence="3">Global transcriptional regulator that regulates virulence factors production by activating or repressing the expression of a large set of genes in diffusible signal factor (DSF) pathway.</text>
</comment>
<comment type="activity regulation">
    <text evidence="3">Allosterically inhibited by cyclic di-GMP (c-di-GMP), which binds to Clp and abolishes its ability to bind its target gene promoter.</text>
</comment>
<comment type="subunit">
    <text evidence="1">Homodimer.</text>
</comment>
<comment type="subcellular location">
    <subcellularLocation>
        <location evidence="4">Cytoplasm</location>
    </subcellularLocation>
</comment>
<comment type="domain">
    <text evidence="1">Binding of c-di-GMP appears to trigger the active Clp conformation into an open form or inactive state, hence abolishing its DNA-binding ability.</text>
</comment>
<reference key="1">
    <citation type="journal article" date="2005" name="Genome Res.">
        <title>Comparative and functional genomic analyses of the pathogenicity of phytopathogen Xanthomonas campestris pv. campestris.</title>
        <authorList>
            <person name="Qian W."/>
            <person name="Jia Y."/>
            <person name="Ren S.-X."/>
            <person name="He Y.-Q."/>
            <person name="Feng J.-X."/>
            <person name="Lu L.-F."/>
            <person name="Sun Q."/>
            <person name="Ying G."/>
            <person name="Tang D.-J."/>
            <person name="Tang H."/>
            <person name="Wu W."/>
            <person name="Hao P."/>
            <person name="Wang L."/>
            <person name="Jiang B.-L."/>
            <person name="Zeng S."/>
            <person name="Gu W.-Y."/>
            <person name="Lu G."/>
            <person name="Rong L."/>
            <person name="Tian Y."/>
            <person name="Yao Z."/>
            <person name="Fu G."/>
            <person name="Chen B."/>
            <person name="Fang R."/>
            <person name="Qiang B."/>
            <person name="Chen Z."/>
            <person name="Zhao G.-P."/>
            <person name="Tang J.-L."/>
            <person name="He C."/>
        </authorList>
    </citation>
    <scope>NUCLEOTIDE SEQUENCE [LARGE SCALE GENOMIC DNA]</scope>
    <source>
        <strain>8004</strain>
    </source>
</reference>
<reference key="2">
    <citation type="journal article" date="2010" name="J. Bacteriol.">
        <title>The cyclic nucleotide monophosphate domain of Xanthomonas campestris global regulator Clp defines a new class of cyclic di-GMP effectors.</title>
        <authorList>
            <person name="Tao F."/>
            <person name="He Y.W."/>
            <person name="Wu D.H."/>
            <person name="Swarup S."/>
            <person name="Zhang L.H."/>
        </authorList>
    </citation>
    <scope>FUNCTION</scope>
    <scope>DNA-BINDING</scope>
    <scope>ACTIVITY REGULATION</scope>
    <scope>MUTAGENESIS OF GLU-99 AND THR-149</scope>
    <source>
        <strain>8004</strain>
    </source>
</reference>
<sequence length="230" mass="25711">MSLGNTTVVTTTVRNATPSLTLDAGTIERFLAHSHRRRYPTRTDVFRPGDPAGTLYYVISGSVSIIAEEDDDRELVLGYFGSGEFVGEMGLFIESDTREVILRTRTQCELAEISYERLQQLFQTSLSPDAPRILYAIGVQLSKRLLDTTRKASRLAFLDVTDRIVRTLHDLSKEPEAMSHPQGTQLRVSRQELARLVGCSREMAGRVLKKLQADGLLHARGKTVVLYGTR</sequence>